<accession>Q0T4S2</accession>
<sequence>MALTKAEMSEYLFDKLGLSKRDAKELVELFFEEIRRALENGEQVKLSGFGNFDLRDKNQRPGRNPKTGEDIPITARRVVTFRPGQKLKSRVENASPKDE</sequence>
<organism>
    <name type="scientific">Shigella flexneri serotype 5b (strain 8401)</name>
    <dbReference type="NCBI Taxonomy" id="373384"/>
    <lineage>
        <taxon>Bacteria</taxon>
        <taxon>Pseudomonadati</taxon>
        <taxon>Pseudomonadota</taxon>
        <taxon>Gammaproteobacteria</taxon>
        <taxon>Enterobacterales</taxon>
        <taxon>Enterobacteriaceae</taxon>
        <taxon>Shigella</taxon>
    </lineage>
</organism>
<comment type="function">
    <text evidence="1">This protein is one of the two subunits of integration host factor, a specific DNA-binding protein that functions in genetic recombination as well as in transcriptional and translational control.</text>
</comment>
<comment type="subunit">
    <text evidence="1">Heterodimer of an alpha and a beta chain.</text>
</comment>
<comment type="similarity">
    <text evidence="1">Belongs to the bacterial histone-like protein family.</text>
</comment>
<proteinExistence type="inferred from homology"/>
<name>IHFA_SHIF8</name>
<reference key="1">
    <citation type="journal article" date="2006" name="BMC Genomics">
        <title>Complete genome sequence of Shigella flexneri 5b and comparison with Shigella flexneri 2a.</title>
        <authorList>
            <person name="Nie H."/>
            <person name="Yang F."/>
            <person name="Zhang X."/>
            <person name="Yang J."/>
            <person name="Chen L."/>
            <person name="Wang J."/>
            <person name="Xiong Z."/>
            <person name="Peng J."/>
            <person name="Sun L."/>
            <person name="Dong J."/>
            <person name="Xue Y."/>
            <person name="Xu X."/>
            <person name="Chen S."/>
            <person name="Yao Z."/>
            <person name="Shen Y."/>
            <person name="Jin Q."/>
        </authorList>
    </citation>
    <scope>NUCLEOTIDE SEQUENCE [LARGE SCALE GENOMIC DNA]</scope>
    <source>
        <strain>8401</strain>
    </source>
</reference>
<gene>
    <name evidence="1" type="primary">ihfA</name>
    <name evidence="1" type="synonym">himA</name>
    <name type="ordered locus">SFV_1511</name>
</gene>
<protein>
    <recommendedName>
        <fullName evidence="1">Integration host factor subunit alpha</fullName>
        <shortName evidence="1">IHF-alpha</shortName>
    </recommendedName>
</protein>
<keyword id="KW-0233">DNA recombination</keyword>
<keyword id="KW-0238">DNA-binding</keyword>
<keyword id="KW-0804">Transcription</keyword>
<keyword id="KW-0805">Transcription regulation</keyword>
<keyword id="KW-0810">Translation regulation</keyword>
<evidence type="ECO:0000255" key="1">
    <source>
        <dbReference type="HAMAP-Rule" id="MF_00380"/>
    </source>
</evidence>
<evidence type="ECO:0000256" key="2">
    <source>
        <dbReference type="SAM" id="MobiDB-lite"/>
    </source>
</evidence>
<dbReference type="EMBL" id="CP000266">
    <property type="protein sequence ID" value="ABF03693.1"/>
    <property type="molecule type" value="Genomic_DNA"/>
</dbReference>
<dbReference type="RefSeq" id="WP_001229265.1">
    <property type="nucleotide sequence ID" value="NC_008258.1"/>
</dbReference>
<dbReference type="SMR" id="Q0T4S2"/>
<dbReference type="GeneID" id="93775925"/>
<dbReference type="KEGG" id="sfv:SFV_1511"/>
<dbReference type="HOGENOM" id="CLU_105066_1_3_6"/>
<dbReference type="Proteomes" id="UP000000659">
    <property type="component" value="Chromosome"/>
</dbReference>
<dbReference type="GO" id="GO:0005829">
    <property type="term" value="C:cytosol"/>
    <property type="evidence" value="ECO:0007669"/>
    <property type="project" value="TreeGrafter"/>
</dbReference>
<dbReference type="GO" id="GO:0003677">
    <property type="term" value="F:DNA binding"/>
    <property type="evidence" value="ECO:0007669"/>
    <property type="project" value="UniProtKB-UniRule"/>
</dbReference>
<dbReference type="GO" id="GO:0030527">
    <property type="term" value="F:structural constituent of chromatin"/>
    <property type="evidence" value="ECO:0007669"/>
    <property type="project" value="InterPro"/>
</dbReference>
<dbReference type="GO" id="GO:0006310">
    <property type="term" value="P:DNA recombination"/>
    <property type="evidence" value="ECO:0007669"/>
    <property type="project" value="UniProtKB-UniRule"/>
</dbReference>
<dbReference type="GO" id="GO:0009893">
    <property type="term" value="P:positive regulation of metabolic process"/>
    <property type="evidence" value="ECO:0007669"/>
    <property type="project" value="UniProtKB-ARBA"/>
</dbReference>
<dbReference type="GO" id="GO:0006355">
    <property type="term" value="P:regulation of DNA-templated transcription"/>
    <property type="evidence" value="ECO:0007669"/>
    <property type="project" value="UniProtKB-UniRule"/>
</dbReference>
<dbReference type="GO" id="GO:0006417">
    <property type="term" value="P:regulation of translation"/>
    <property type="evidence" value="ECO:0007669"/>
    <property type="project" value="UniProtKB-UniRule"/>
</dbReference>
<dbReference type="CDD" id="cd13835">
    <property type="entry name" value="IHF_A"/>
    <property type="match status" value="1"/>
</dbReference>
<dbReference type="FunFam" id="4.10.520.10:FF:000002">
    <property type="entry name" value="Integration host factor subunit alpha"/>
    <property type="match status" value="1"/>
</dbReference>
<dbReference type="Gene3D" id="4.10.520.10">
    <property type="entry name" value="IHF-like DNA-binding proteins"/>
    <property type="match status" value="1"/>
</dbReference>
<dbReference type="HAMAP" id="MF_00380">
    <property type="entry name" value="IHF_alpha"/>
    <property type="match status" value="1"/>
</dbReference>
<dbReference type="InterPro" id="IPR000119">
    <property type="entry name" value="Hist_DNA-bd"/>
</dbReference>
<dbReference type="InterPro" id="IPR020816">
    <property type="entry name" value="Histone-like_DNA-bd_CS"/>
</dbReference>
<dbReference type="InterPro" id="IPR010992">
    <property type="entry name" value="IHF-like_DNA-bd_dom_sf"/>
</dbReference>
<dbReference type="InterPro" id="IPR005684">
    <property type="entry name" value="IHF_alpha"/>
</dbReference>
<dbReference type="NCBIfam" id="TIGR00987">
    <property type="entry name" value="himA"/>
    <property type="match status" value="1"/>
</dbReference>
<dbReference type="NCBIfam" id="NF001401">
    <property type="entry name" value="PRK00285.1"/>
    <property type="match status" value="1"/>
</dbReference>
<dbReference type="PANTHER" id="PTHR33175">
    <property type="entry name" value="DNA-BINDING PROTEIN HU"/>
    <property type="match status" value="1"/>
</dbReference>
<dbReference type="PANTHER" id="PTHR33175:SF2">
    <property type="entry name" value="INTEGRATION HOST FACTOR SUBUNIT ALPHA"/>
    <property type="match status" value="1"/>
</dbReference>
<dbReference type="Pfam" id="PF00216">
    <property type="entry name" value="Bac_DNA_binding"/>
    <property type="match status" value="1"/>
</dbReference>
<dbReference type="PRINTS" id="PR01727">
    <property type="entry name" value="DNABINDINGHU"/>
</dbReference>
<dbReference type="SMART" id="SM00411">
    <property type="entry name" value="BHL"/>
    <property type="match status" value="1"/>
</dbReference>
<dbReference type="SUPFAM" id="SSF47729">
    <property type="entry name" value="IHF-like DNA-binding proteins"/>
    <property type="match status" value="1"/>
</dbReference>
<dbReference type="PROSITE" id="PS00045">
    <property type="entry name" value="HISTONE_LIKE"/>
    <property type="match status" value="1"/>
</dbReference>
<feature type="chain" id="PRO_0000277780" description="Integration host factor subunit alpha">
    <location>
        <begin position="1"/>
        <end position="99"/>
    </location>
</feature>
<feature type="region of interest" description="Disordered" evidence="2">
    <location>
        <begin position="49"/>
        <end position="73"/>
    </location>
</feature>